<proteinExistence type="inferred from homology"/>
<sequence>MADQVICALSDVFARWFAYQQQRGIQVCCPEDELRPSPCRYDAQHPERWKPWSRPEMSDLQNIASALECVFHPAIHAYYGHGYAGQITASFKGLAVTLVQPWNEEDFERLQQNLVAHVLMLRRLKLPITLFLATVSDESRVISLDNETGEVVLEQLGKKKRWVLADSLPAFLQRLSPLAQTAVTPAVPVNLPA</sequence>
<dbReference type="EMBL" id="CP001616">
    <property type="protein sequence ID" value="ACQ92123.1"/>
    <property type="molecule type" value="Genomic_DNA"/>
</dbReference>
<dbReference type="RefSeq" id="WP_012728722.1">
    <property type="nucleotide sequence ID" value="NC_012691.1"/>
</dbReference>
<dbReference type="SMR" id="C4L9Z4"/>
<dbReference type="STRING" id="595494.Tola_0494"/>
<dbReference type="KEGG" id="tau:Tola_0494"/>
<dbReference type="eggNOG" id="ENOG502ZCMR">
    <property type="taxonomic scope" value="Bacteria"/>
</dbReference>
<dbReference type="HOGENOM" id="CLU_121866_0_0_6"/>
<dbReference type="Proteomes" id="UP000009073">
    <property type="component" value="Chromosome"/>
</dbReference>
<dbReference type="GO" id="GO:0009898">
    <property type="term" value="C:cytoplasmic side of plasma membrane"/>
    <property type="evidence" value="ECO:0007669"/>
    <property type="project" value="InterPro"/>
</dbReference>
<dbReference type="CDD" id="cd16323">
    <property type="entry name" value="Syd"/>
    <property type="match status" value="1"/>
</dbReference>
<dbReference type="Gene3D" id="3.40.1580.20">
    <property type="entry name" value="Syd protein"/>
    <property type="match status" value="1"/>
</dbReference>
<dbReference type="HAMAP" id="MF_01104">
    <property type="entry name" value="Syd"/>
    <property type="match status" value="1"/>
</dbReference>
<dbReference type="InterPro" id="IPR009948">
    <property type="entry name" value="Syd"/>
</dbReference>
<dbReference type="InterPro" id="IPR038228">
    <property type="entry name" value="Syd_sf"/>
</dbReference>
<dbReference type="NCBIfam" id="NF003439">
    <property type="entry name" value="PRK04968.1"/>
    <property type="match status" value="1"/>
</dbReference>
<dbReference type="Pfam" id="PF07348">
    <property type="entry name" value="Syd"/>
    <property type="match status" value="1"/>
</dbReference>
<evidence type="ECO:0000255" key="1">
    <source>
        <dbReference type="HAMAP-Rule" id="MF_01104"/>
    </source>
</evidence>
<feature type="chain" id="PRO_1000213556" description="Protein Syd">
    <location>
        <begin position="1"/>
        <end position="193"/>
    </location>
</feature>
<organism>
    <name type="scientific">Tolumonas auensis (strain DSM 9187 / NBRC 110442 / TA 4)</name>
    <dbReference type="NCBI Taxonomy" id="595494"/>
    <lineage>
        <taxon>Bacteria</taxon>
        <taxon>Pseudomonadati</taxon>
        <taxon>Pseudomonadota</taxon>
        <taxon>Gammaproteobacteria</taxon>
        <taxon>Aeromonadales</taxon>
        <taxon>Aeromonadaceae</taxon>
        <taxon>Tolumonas</taxon>
    </lineage>
</organism>
<gene>
    <name evidence="1" type="primary">syd</name>
    <name type="ordered locus">Tola_0494</name>
</gene>
<comment type="function">
    <text evidence="1">Interacts with the SecY protein in vivo. May bind preferentially to an uncomplexed state of SecY, thus functioning either as a chelating agent for excess SecY in the cell or as a regulatory factor that negatively controls the translocase function.</text>
</comment>
<comment type="subcellular location">
    <subcellularLocation>
        <location evidence="1">Cell inner membrane</location>
        <topology evidence="1">Peripheral membrane protein</topology>
        <orientation evidence="1">Cytoplasmic side</orientation>
    </subcellularLocation>
    <text evidence="1">Loosely associated with the cytoplasmic side of the inner membrane, probably via SecY.</text>
</comment>
<comment type="similarity">
    <text evidence="1">Belongs to the Syd family.</text>
</comment>
<reference key="1">
    <citation type="submission" date="2009-05" db="EMBL/GenBank/DDBJ databases">
        <title>Complete sequence of Tolumonas auensis DSM 9187.</title>
        <authorList>
            <consortium name="US DOE Joint Genome Institute"/>
            <person name="Lucas S."/>
            <person name="Copeland A."/>
            <person name="Lapidus A."/>
            <person name="Glavina del Rio T."/>
            <person name="Tice H."/>
            <person name="Bruce D."/>
            <person name="Goodwin L."/>
            <person name="Pitluck S."/>
            <person name="Chertkov O."/>
            <person name="Brettin T."/>
            <person name="Detter J.C."/>
            <person name="Han C."/>
            <person name="Larimer F."/>
            <person name="Land M."/>
            <person name="Hauser L."/>
            <person name="Kyrpides N."/>
            <person name="Mikhailova N."/>
            <person name="Spring S."/>
            <person name="Beller H."/>
        </authorList>
    </citation>
    <scope>NUCLEOTIDE SEQUENCE [LARGE SCALE GENOMIC DNA]</scope>
    <source>
        <strain>DSM 9187 / NBRC 110442 / TA 4</strain>
    </source>
</reference>
<keyword id="KW-0997">Cell inner membrane</keyword>
<keyword id="KW-1003">Cell membrane</keyword>
<keyword id="KW-0472">Membrane</keyword>
<keyword id="KW-1185">Reference proteome</keyword>
<name>SYDP_TOLAT</name>
<accession>C4L9Z4</accession>
<protein>
    <recommendedName>
        <fullName evidence="1">Protein Syd</fullName>
    </recommendedName>
</protein>